<organism>
    <name type="scientific">Shigella flexneri</name>
    <dbReference type="NCBI Taxonomy" id="623"/>
    <lineage>
        <taxon>Bacteria</taxon>
        <taxon>Pseudomonadati</taxon>
        <taxon>Pseudomonadota</taxon>
        <taxon>Gammaproteobacteria</taxon>
        <taxon>Enterobacterales</taxon>
        <taxon>Enterobacteriaceae</taxon>
        <taxon>Shigella</taxon>
    </lineage>
</organism>
<dbReference type="EMBL" id="AE005674">
    <property type="protein sequence ID" value="AAN45657.2"/>
    <property type="molecule type" value="Genomic_DNA"/>
</dbReference>
<dbReference type="EMBL" id="AE014073">
    <property type="protein sequence ID" value="AAP19444.1"/>
    <property type="molecule type" value="Genomic_DNA"/>
</dbReference>
<dbReference type="RefSeq" id="WP_000583469.1">
    <property type="nucleotide sequence ID" value="NZ_WPGW01000068.1"/>
</dbReference>
<dbReference type="SMR" id="P0AF97"/>
<dbReference type="STRING" id="198214.SF4239"/>
<dbReference type="PaxDb" id="198214-SF4239"/>
<dbReference type="DNASU" id="1080705"/>
<dbReference type="KEGG" id="sfl:SF4239"/>
<dbReference type="KEGG" id="sfx:S4500"/>
<dbReference type="PATRIC" id="fig|198214.7.peg.5000"/>
<dbReference type="HOGENOM" id="CLU_107139_3_0_6"/>
<dbReference type="Proteomes" id="UP000001006">
    <property type="component" value="Chromosome"/>
</dbReference>
<dbReference type="Proteomes" id="UP000002673">
    <property type="component" value="Chromosome"/>
</dbReference>
<dbReference type="GO" id="GO:0005829">
    <property type="term" value="C:cytosol"/>
    <property type="evidence" value="ECO:0007669"/>
    <property type="project" value="TreeGrafter"/>
</dbReference>
<dbReference type="GO" id="GO:0044010">
    <property type="term" value="P:single-species biofilm formation"/>
    <property type="evidence" value="ECO:0007669"/>
    <property type="project" value="TreeGrafter"/>
</dbReference>
<dbReference type="FunFam" id="2.60.120.370:FF:000002">
    <property type="entry name" value="YhcH/YjgK/YiaL family protein"/>
    <property type="match status" value="1"/>
</dbReference>
<dbReference type="Gene3D" id="2.60.120.370">
    <property type="entry name" value="YhcH/YjgK/YiaL"/>
    <property type="match status" value="1"/>
</dbReference>
<dbReference type="InterPro" id="IPR004375">
    <property type="entry name" value="NanQ/TabA/YiaL"/>
</dbReference>
<dbReference type="InterPro" id="IPR037012">
    <property type="entry name" value="NanQ/TabA/YiaL_sf"/>
</dbReference>
<dbReference type="NCBIfam" id="TIGR00022">
    <property type="entry name" value="YhcH/YjgK/YiaL family protein"/>
    <property type="match status" value="1"/>
</dbReference>
<dbReference type="PANTHER" id="PTHR34986">
    <property type="entry name" value="EVOLVED BETA-GALACTOSIDASE SUBUNIT BETA"/>
    <property type="match status" value="1"/>
</dbReference>
<dbReference type="PANTHER" id="PTHR34986:SF4">
    <property type="entry name" value="EVOLVED BETA-GALACTOSIDASE SUBUNIT BETA-RELATED"/>
    <property type="match status" value="1"/>
</dbReference>
<dbReference type="Pfam" id="PF04074">
    <property type="entry name" value="DUF386"/>
    <property type="match status" value="1"/>
</dbReference>
<dbReference type="SUPFAM" id="SSF51197">
    <property type="entry name" value="Clavaminate synthase-like"/>
    <property type="match status" value="1"/>
</dbReference>
<protein>
    <recommendedName>
        <fullName>Toxin-antitoxin biofilm protein TabA homolog</fullName>
    </recommendedName>
</protein>
<comment type="similarity">
    <text evidence="2">Belongs to the TabA/YiaL family.</text>
</comment>
<name>TABA_SHIFL</name>
<feature type="chain" id="PRO_0000169766" description="Toxin-antitoxin biofilm protein TabA homolog">
    <location>
        <begin position="1"/>
        <end position="150"/>
    </location>
</feature>
<feature type="modified residue" description="N6-acetyllysine" evidence="1">
    <location>
        <position position="36"/>
    </location>
</feature>
<sequence length="150" mass="16865">MIIGNIHNLQPWLPQELRQAIEHIKAHVTAETPKGKHDIEGNRLFYLISEDMTEPYEARRAEYHARYLDIQIVLKGQEGMTFSTQPAGAPDTDWLADKDIAFLPEGVDEKTVILNEGDFVVFYPGEVHKPLCAVGAPAQVRKAVVKMLMA</sequence>
<evidence type="ECO:0000250" key="1"/>
<evidence type="ECO:0000305" key="2"/>
<gene>
    <name type="primary">tabA</name>
    <name type="ordered locus">SF4239</name>
    <name type="ordered locus">S4500</name>
</gene>
<keyword id="KW-0007">Acetylation</keyword>
<keyword id="KW-1185">Reference proteome</keyword>
<reference key="1">
    <citation type="journal article" date="2002" name="Nucleic Acids Res.">
        <title>Genome sequence of Shigella flexneri 2a: insights into pathogenicity through comparison with genomes of Escherichia coli K12 and O157.</title>
        <authorList>
            <person name="Jin Q."/>
            <person name="Yuan Z."/>
            <person name="Xu J."/>
            <person name="Wang Y."/>
            <person name="Shen Y."/>
            <person name="Lu W."/>
            <person name="Wang J."/>
            <person name="Liu H."/>
            <person name="Yang J."/>
            <person name="Yang F."/>
            <person name="Zhang X."/>
            <person name="Zhang J."/>
            <person name="Yang G."/>
            <person name="Wu H."/>
            <person name="Qu D."/>
            <person name="Dong J."/>
            <person name="Sun L."/>
            <person name="Xue Y."/>
            <person name="Zhao A."/>
            <person name="Gao Y."/>
            <person name="Zhu J."/>
            <person name="Kan B."/>
            <person name="Ding K."/>
            <person name="Chen S."/>
            <person name="Cheng H."/>
            <person name="Yao Z."/>
            <person name="He B."/>
            <person name="Chen R."/>
            <person name="Ma D."/>
            <person name="Qiang B."/>
            <person name="Wen Y."/>
            <person name="Hou Y."/>
            <person name="Yu J."/>
        </authorList>
    </citation>
    <scope>NUCLEOTIDE SEQUENCE [LARGE SCALE GENOMIC DNA]</scope>
    <source>
        <strain>301 / Serotype 2a</strain>
    </source>
</reference>
<reference key="2">
    <citation type="journal article" date="2003" name="Infect. Immun.">
        <title>Complete genome sequence and comparative genomics of Shigella flexneri serotype 2a strain 2457T.</title>
        <authorList>
            <person name="Wei J."/>
            <person name="Goldberg M.B."/>
            <person name="Burland V."/>
            <person name="Venkatesan M.M."/>
            <person name="Deng W."/>
            <person name="Fournier G."/>
            <person name="Mayhew G.F."/>
            <person name="Plunkett G. III"/>
            <person name="Rose D.J."/>
            <person name="Darling A."/>
            <person name="Mau B."/>
            <person name="Perna N.T."/>
            <person name="Payne S.M."/>
            <person name="Runyen-Janecky L.J."/>
            <person name="Zhou S."/>
            <person name="Schwartz D.C."/>
            <person name="Blattner F.R."/>
        </authorList>
    </citation>
    <scope>NUCLEOTIDE SEQUENCE [LARGE SCALE GENOMIC DNA]</scope>
    <source>
        <strain>ATCC 700930 / 2457T / Serotype 2a</strain>
    </source>
</reference>
<accession>P0AF97</accession>
<accession>P39335</accession>
<proteinExistence type="inferred from homology"/>